<comment type="function">
    <text evidence="1">Displays ATPase and GTPase activities.</text>
</comment>
<comment type="similarity">
    <text evidence="1">Belongs to the RapZ-like family.</text>
</comment>
<evidence type="ECO:0000255" key="1">
    <source>
        <dbReference type="HAMAP-Rule" id="MF_00636"/>
    </source>
</evidence>
<feature type="chain" id="PRO_0000383279" description="Nucleotide-binding protein RSal33209_2275">
    <location>
        <begin position="1"/>
        <end position="306"/>
    </location>
</feature>
<feature type="binding site" evidence="1">
    <location>
        <begin position="29"/>
        <end position="36"/>
    </location>
    <ligand>
        <name>ATP</name>
        <dbReference type="ChEBI" id="CHEBI:30616"/>
    </ligand>
</feature>
<feature type="binding site" evidence="1">
    <location>
        <begin position="80"/>
        <end position="83"/>
    </location>
    <ligand>
        <name>GTP</name>
        <dbReference type="ChEBI" id="CHEBI:37565"/>
    </ligand>
</feature>
<organism>
    <name type="scientific">Renibacterium salmoninarum (strain ATCC 33209 / DSM 20767 / JCM 11484 / NBRC 15589 / NCIMB 2235)</name>
    <dbReference type="NCBI Taxonomy" id="288705"/>
    <lineage>
        <taxon>Bacteria</taxon>
        <taxon>Bacillati</taxon>
        <taxon>Actinomycetota</taxon>
        <taxon>Actinomycetes</taxon>
        <taxon>Micrococcales</taxon>
        <taxon>Micrococcaceae</taxon>
        <taxon>Renibacterium</taxon>
    </lineage>
</organism>
<sequence length="306" mass="33383">MTDSTPEAGAEGEFTPVKPQESELLVVTGMSGAGRSTAANALEDHGWYVVENLPPQMLTTLADLVARTPNSLPKLAVVVDVRGKAFFADIRDSLNTLAASGISYRVLFLDASDNTLVRRFEQGRRPHPLQGDGRMLDGIAAEREILALLRDSADVVVDTTSLNVHELANQVTGLFSDSGPVVLRLTVMSFGFKYGLPVDANYVADVRFLPNPHWVPALRPHTGLDQDVSDFVLIENDANEFVTRYVRALGPVLEGYRRENKHYATIAVGCTGGKHRSVAVSVELAKRLAQLPRVTVSTKHRDLGRE</sequence>
<reference key="1">
    <citation type="journal article" date="2008" name="J. Bacteriol.">
        <title>Genome sequence of the fish pathogen Renibacterium salmoninarum suggests reductive evolution away from an environmental Arthrobacter ancestor.</title>
        <authorList>
            <person name="Wiens G.D."/>
            <person name="Rockey D.D."/>
            <person name="Wu Z."/>
            <person name="Chang J."/>
            <person name="Levy R."/>
            <person name="Crane S."/>
            <person name="Chen D.S."/>
            <person name="Capri G.R."/>
            <person name="Burnett J.R."/>
            <person name="Sudheesh P.S."/>
            <person name="Schipma M.J."/>
            <person name="Burd H."/>
            <person name="Bhattacharyya A."/>
            <person name="Rhodes L.D."/>
            <person name="Kaul R."/>
            <person name="Strom M.S."/>
        </authorList>
    </citation>
    <scope>NUCLEOTIDE SEQUENCE [LARGE SCALE GENOMIC DNA]</scope>
    <source>
        <strain>ATCC 33209 / DSM 20767 / JCM 11484 / NBRC 15589 / NCIMB 2235</strain>
    </source>
</reference>
<keyword id="KW-0067">ATP-binding</keyword>
<keyword id="KW-0342">GTP-binding</keyword>
<keyword id="KW-0547">Nucleotide-binding</keyword>
<keyword id="KW-1185">Reference proteome</keyword>
<name>Y2275_RENSM</name>
<proteinExistence type="inferred from homology"/>
<dbReference type="EMBL" id="CP000910">
    <property type="protein sequence ID" value="ABY24006.1"/>
    <property type="molecule type" value="Genomic_DNA"/>
</dbReference>
<dbReference type="RefSeq" id="WP_012245671.1">
    <property type="nucleotide sequence ID" value="NC_010168.1"/>
</dbReference>
<dbReference type="SMR" id="A9WT68"/>
<dbReference type="STRING" id="288705.RSal33209_2275"/>
<dbReference type="KEGG" id="rsa:RSal33209_2275"/>
<dbReference type="eggNOG" id="COG1660">
    <property type="taxonomic scope" value="Bacteria"/>
</dbReference>
<dbReference type="HOGENOM" id="CLU_059558_0_0_11"/>
<dbReference type="Proteomes" id="UP000002007">
    <property type="component" value="Chromosome"/>
</dbReference>
<dbReference type="GO" id="GO:0005524">
    <property type="term" value="F:ATP binding"/>
    <property type="evidence" value="ECO:0007669"/>
    <property type="project" value="UniProtKB-UniRule"/>
</dbReference>
<dbReference type="GO" id="GO:0005525">
    <property type="term" value="F:GTP binding"/>
    <property type="evidence" value="ECO:0007669"/>
    <property type="project" value="UniProtKB-UniRule"/>
</dbReference>
<dbReference type="Gene3D" id="3.40.50.300">
    <property type="entry name" value="P-loop containing nucleotide triphosphate hydrolases"/>
    <property type="match status" value="1"/>
</dbReference>
<dbReference type="HAMAP" id="MF_00636">
    <property type="entry name" value="RapZ_like"/>
    <property type="match status" value="1"/>
</dbReference>
<dbReference type="InterPro" id="IPR027417">
    <property type="entry name" value="P-loop_NTPase"/>
</dbReference>
<dbReference type="InterPro" id="IPR005337">
    <property type="entry name" value="RapZ-like"/>
</dbReference>
<dbReference type="InterPro" id="IPR053930">
    <property type="entry name" value="RapZ-like_N"/>
</dbReference>
<dbReference type="InterPro" id="IPR053931">
    <property type="entry name" value="RapZ_C"/>
</dbReference>
<dbReference type="NCBIfam" id="NF003828">
    <property type="entry name" value="PRK05416.1"/>
    <property type="match status" value="1"/>
</dbReference>
<dbReference type="PANTHER" id="PTHR30448">
    <property type="entry name" value="RNASE ADAPTER PROTEIN RAPZ"/>
    <property type="match status" value="1"/>
</dbReference>
<dbReference type="PANTHER" id="PTHR30448:SF0">
    <property type="entry name" value="RNASE ADAPTER PROTEIN RAPZ"/>
    <property type="match status" value="1"/>
</dbReference>
<dbReference type="Pfam" id="PF22740">
    <property type="entry name" value="PapZ_C"/>
    <property type="match status" value="1"/>
</dbReference>
<dbReference type="Pfam" id="PF03668">
    <property type="entry name" value="RapZ-like_N"/>
    <property type="match status" value="1"/>
</dbReference>
<dbReference type="PIRSF" id="PIRSF005052">
    <property type="entry name" value="P-loopkin"/>
    <property type="match status" value="1"/>
</dbReference>
<dbReference type="SUPFAM" id="SSF52540">
    <property type="entry name" value="P-loop containing nucleoside triphosphate hydrolases"/>
    <property type="match status" value="1"/>
</dbReference>
<protein>
    <recommendedName>
        <fullName evidence="1">Nucleotide-binding protein RSal33209_2275</fullName>
    </recommendedName>
</protein>
<accession>A9WT68</accession>
<gene>
    <name type="ordered locus">RSal33209_2275</name>
</gene>